<evidence type="ECO:0000255" key="1">
    <source>
        <dbReference type="PROSITE-ProRule" id="PRU00042"/>
    </source>
</evidence>
<evidence type="ECO:0000255" key="2">
    <source>
        <dbReference type="PROSITE-ProRule" id="PRU00187"/>
    </source>
</evidence>
<evidence type="ECO:0000256" key="3">
    <source>
        <dbReference type="SAM" id="MobiDB-lite"/>
    </source>
</evidence>
<evidence type="ECO:0000269" key="4">
    <source>
    </source>
</evidence>
<evidence type="ECO:0000269" key="5">
    <source>
    </source>
</evidence>
<evidence type="ECO:0000303" key="6">
    <source>
    </source>
</evidence>
<evidence type="ECO:0000303" key="7">
    <source>
    </source>
</evidence>
<evidence type="ECO:0000305" key="8"/>
<evidence type="ECO:0007744" key="9">
    <source>
    </source>
</evidence>
<comment type="function">
    <text evidence="8">May be involved in transcriptional regulation.</text>
</comment>
<comment type="interaction">
    <interactant intactId="EBI-3920053">
        <id>Q16670</id>
    </interactant>
    <interactant intactId="EBI-10171416">
        <id>Q96JN2-2</id>
        <label>CCDC136</label>
    </interactant>
    <organismsDiffer>false</organismsDiffer>
    <experiments>3</experiments>
</comment>
<comment type="interaction">
    <interactant intactId="EBI-3920053">
        <id>Q16670</id>
    </interactant>
    <interactant intactId="EBI-748961">
        <id>O95273</id>
        <label>CCNDBP1</label>
    </interactant>
    <organismsDiffer>false</organismsDiffer>
    <experiments>3</experiments>
</comment>
<comment type="interaction">
    <interactant intactId="EBI-3920053">
        <id>Q16670</id>
    </interactant>
    <interactant intactId="EBI-11063830">
        <id>Q86X02</id>
        <label>CDR2L</label>
    </interactant>
    <organismsDiffer>false</organismsDiffer>
    <experiments>3</experiments>
</comment>
<comment type="interaction">
    <interactant intactId="EBI-3920053">
        <id>Q16670</id>
    </interactant>
    <interactant intactId="EBI-5661036">
        <id>A1L4K1</id>
        <label>FSD2</label>
    </interactant>
    <organismsDiffer>false</organismsDiffer>
    <experiments>3</experiments>
</comment>
<comment type="interaction">
    <interactant intactId="EBI-3920053">
        <id>Q16670</id>
    </interactant>
    <interactant intactId="EBI-5916454">
        <id>A6NEM1</id>
        <label>GOLGA6L9</label>
    </interactant>
    <organismsDiffer>false</organismsDiffer>
    <experiments>3</experiments>
</comment>
<comment type="interaction">
    <interactant intactId="EBI-3920053">
        <id>Q16670</id>
    </interactant>
    <interactant intactId="EBI-747754">
        <id>P28799</id>
        <label>GRN</label>
    </interactant>
    <organismsDiffer>false</organismsDiffer>
    <experiments>3</experiments>
</comment>
<comment type="interaction">
    <interactant intactId="EBI-3920053">
        <id>Q16670</id>
    </interactant>
    <interactant intactId="EBI-352682">
        <id>P04792</id>
        <label>HSPB1</label>
    </interactant>
    <organismsDiffer>false</organismsDiffer>
    <experiments>3</experiments>
</comment>
<comment type="interaction">
    <interactant intactId="EBI-3920053">
        <id>Q16670</id>
    </interactant>
    <interactant intactId="EBI-10178153">
        <id>P60372</id>
        <label>KRTAP10-4</label>
    </interactant>
    <organismsDiffer>false</organismsDiffer>
    <experiments>3</experiments>
</comment>
<comment type="interaction">
    <interactant intactId="EBI-3920053">
        <id>Q16670</id>
    </interactant>
    <interactant intactId="EBI-10172150">
        <id>P60370</id>
        <label>KRTAP10-5</label>
    </interactant>
    <organismsDiffer>false</organismsDiffer>
    <experiments>3</experiments>
</comment>
<comment type="interaction">
    <interactant intactId="EBI-3920053">
        <id>Q16670</id>
    </interactant>
    <interactant intactId="EBI-10172290">
        <id>P60409</id>
        <label>KRTAP10-7</label>
    </interactant>
    <organismsDiffer>false</organismsDiffer>
    <experiments>7</experiments>
</comment>
<comment type="interaction">
    <interactant intactId="EBI-3920053">
        <id>Q16670</id>
    </interactant>
    <interactant intactId="EBI-10172052">
        <id>P60411</id>
        <label>KRTAP10-9</label>
    </interactant>
    <organismsDiffer>false</organismsDiffer>
    <experiments>3</experiments>
</comment>
<comment type="interaction">
    <interactant intactId="EBI-3920053">
        <id>Q16670</id>
    </interactant>
    <interactant intactId="EBI-739863">
        <id>Q9BQ66</id>
        <label>KRTAP4-12</label>
    </interactant>
    <organismsDiffer>false</organismsDiffer>
    <experiments>3</experiments>
</comment>
<comment type="interaction">
    <interactant intactId="EBI-3920053">
        <id>Q16670</id>
    </interactant>
    <interactant intactId="EBI-742948">
        <id>Q5JR59</id>
        <label>MTUS2</label>
    </interactant>
    <organismsDiffer>false</organismsDiffer>
    <experiments>3</experiments>
</comment>
<comment type="interaction">
    <interactant intactId="EBI-3920053">
        <id>Q16670</id>
    </interactant>
    <interactant intactId="EBI-11522433">
        <id>Q5JR59-3</id>
        <label>MTUS2</label>
    </interactant>
    <organismsDiffer>false</organismsDiffer>
    <experiments>3</experiments>
</comment>
<comment type="interaction">
    <interactant intactId="EBI-3920053">
        <id>Q16670</id>
    </interactant>
    <interactant intactId="EBI-1105124">
        <id>Q5VU43</id>
        <label>PDE4DIP</label>
    </interactant>
    <organismsDiffer>false</organismsDiffer>
    <experiments>3</experiments>
</comment>
<comment type="interaction">
    <interactant intactId="EBI-3920053">
        <id>Q16670</id>
    </interactant>
    <interactant intactId="EBI-725997">
        <id>Q8WV44</id>
        <label>TRIM41</label>
    </interactant>
    <organismsDiffer>false</organismsDiffer>
    <experiments>3</experiments>
</comment>
<comment type="interaction">
    <interactant intactId="EBI-3920053">
        <id>Q16670</id>
    </interactant>
    <interactant intactId="EBI-720609">
        <id>O76024</id>
        <label>WFS1</label>
    </interactant>
    <organismsDiffer>false</organismsDiffer>
    <experiments>3</experiments>
</comment>
<comment type="subcellular location">
    <subcellularLocation>
        <location evidence="2 5">Nucleus</location>
    </subcellularLocation>
</comment>
<comment type="alternative products">
    <event type="alternative splicing"/>
    <isoform>
        <id>Q16670-1</id>
        <name>1</name>
        <sequence type="displayed"/>
    </isoform>
    <isoform>
        <id>Q16670-2</id>
        <name>2</name>
        <sequence type="described" ref="VSP_028702"/>
    </isoform>
</comment>
<comment type="induction">
    <text evidence="5">By serum stimulation.</text>
</comment>
<comment type="sequence caution" evidence="8">
    <conflict type="frameshift">
        <sequence resource="EMBL-CDS" id="CAD97775"/>
    </conflict>
</comment>
<dbReference type="EMBL" id="BX537535">
    <property type="protein sequence ID" value="CAD97775.1"/>
    <property type="status" value="ALT_FRAME"/>
    <property type="molecule type" value="mRNA"/>
</dbReference>
<dbReference type="EMBL" id="AL832741">
    <property type="protein sequence ID" value="CAI46119.1"/>
    <property type="molecule type" value="mRNA"/>
</dbReference>
<dbReference type="EMBL" id="AL021997">
    <property type="status" value="NOT_ANNOTATED_CDS"/>
    <property type="molecule type" value="Genomic_DNA"/>
</dbReference>
<dbReference type="EMBL" id="BC013951">
    <property type="protein sequence ID" value="AAH13951.1"/>
    <property type="molecule type" value="mRNA"/>
</dbReference>
<dbReference type="EMBL" id="BC013962">
    <property type="protein sequence ID" value="AAH13962.1"/>
    <property type="molecule type" value="mRNA"/>
</dbReference>
<dbReference type="EMBL" id="Z11773">
    <property type="protein sequence ID" value="CAA77818.1"/>
    <property type="molecule type" value="mRNA"/>
</dbReference>
<dbReference type="CCDS" id="CCDS78119.1">
    <molecule id="Q16670-1"/>
</dbReference>
<dbReference type="PIR" id="A44391">
    <property type="entry name" value="A44391"/>
</dbReference>
<dbReference type="RefSeq" id="NP_001018854.2">
    <property type="nucleotide sequence ID" value="NM_001023560.3"/>
</dbReference>
<dbReference type="RefSeq" id="NP_001104509.1">
    <molecule id="Q16670-1"/>
    <property type="nucleotide sequence ID" value="NM_001111039.3"/>
</dbReference>
<dbReference type="RefSeq" id="NP_001274350.1">
    <property type="nucleotide sequence ID" value="NM_001287421.1"/>
</dbReference>
<dbReference type="RefSeq" id="NP_001274351.1">
    <property type="nucleotide sequence ID" value="NM_001287422.1"/>
</dbReference>
<dbReference type="RefSeq" id="NP_689949.3">
    <property type="nucleotide sequence ID" value="NM_152736.5"/>
</dbReference>
<dbReference type="RefSeq" id="XP_016866753.1">
    <molecule id="Q16670-1"/>
    <property type="nucleotide sequence ID" value="XM_017011264.2"/>
</dbReference>
<dbReference type="RefSeq" id="XP_054212318.1">
    <molecule id="Q16670-1"/>
    <property type="nucleotide sequence ID" value="XM_054356343.1"/>
</dbReference>
<dbReference type="SMR" id="Q16670"/>
<dbReference type="BioGRID" id="113526">
    <property type="interactions" value="60"/>
</dbReference>
<dbReference type="FunCoup" id="Q16670">
    <property type="interactions" value="1472"/>
</dbReference>
<dbReference type="IntAct" id="Q16670">
    <property type="interactions" value="48"/>
</dbReference>
<dbReference type="STRING" id="9606.ENSP00000485228"/>
<dbReference type="iPTMnet" id="Q16670"/>
<dbReference type="PhosphoSitePlus" id="Q16670"/>
<dbReference type="BioMuta" id="ZSCAN26"/>
<dbReference type="DMDM" id="160221312"/>
<dbReference type="jPOST" id="Q16670"/>
<dbReference type="MassIVE" id="Q16670"/>
<dbReference type="PaxDb" id="9606-ENSP00000484931"/>
<dbReference type="PeptideAtlas" id="Q16670"/>
<dbReference type="ProteomicsDB" id="61028">
    <molecule id="Q16670-1"/>
</dbReference>
<dbReference type="ProteomicsDB" id="61029">
    <molecule id="Q16670-2"/>
</dbReference>
<dbReference type="Pumba" id="Q16670"/>
<dbReference type="ABCD" id="Q16670">
    <property type="antibodies" value="2 sequenced antibodies"/>
</dbReference>
<dbReference type="Antibodypedia" id="6168">
    <property type="antibodies" value="196 antibodies from 24 providers"/>
</dbReference>
<dbReference type="DNASU" id="7741"/>
<dbReference type="Ensembl" id="ENST00000623276.3">
    <molecule id="Q16670-1"/>
    <property type="protein sequence ID" value="ENSP00000485228.1"/>
    <property type="gene ID" value="ENSG00000197062.12"/>
</dbReference>
<dbReference type="GeneID" id="7741"/>
<dbReference type="KEGG" id="hsa:7741"/>
<dbReference type="UCSC" id="uc032wpm.2">
    <molecule id="Q16670-1"/>
    <property type="organism name" value="human"/>
</dbReference>
<dbReference type="AGR" id="HGNC:12978"/>
<dbReference type="CTD" id="7741"/>
<dbReference type="DisGeNET" id="7741"/>
<dbReference type="GeneCards" id="ZSCAN26"/>
<dbReference type="HGNC" id="HGNC:12978">
    <property type="gene designation" value="ZSCAN26"/>
</dbReference>
<dbReference type="HPA" id="ENSG00000197062">
    <property type="expression patterns" value="Low tissue specificity"/>
</dbReference>
<dbReference type="MIM" id="616474">
    <property type="type" value="gene"/>
</dbReference>
<dbReference type="neXtProt" id="NX_Q16670"/>
<dbReference type="OpenTargets" id="ENSG00000197062"/>
<dbReference type="PharmGKB" id="PA37559"/>
<dbReference type="VEuPathDB" id="HostDB:ENSG00000197062"/>
<dbReference type="eggNOG" id="KOG1721">
    <property type="taxonomic scope" value="Eukaryota"/>
</dbReference>
<dbReference type="GeneTree" id="ENSGT00940000162298"/>
<dbReference type="HOGENOM" id="CLU_002678_49_2_1"/>
<dbReference type="InParanoid" id="Q16670"/>
<dbReference type="OMA" id="IKHEGSH"/>
<dbReference type="OrthoDB" id="6077919at2759"/>
<dbReference type="PAN-GO" id="Q16670">
    <property type="GO annotations" value="3 GO annotations based on evolutionary models"/>
</dbReference>
<dbReference type="PhylomeDB" id="Q16670"/>
<dbReference type="PathwayCommons" id="Q16670"/>
<dbReference type="SignaLink" id="Q16670"/>
<dbReference type="BioGRID-ORCS" id="7741">
    <property type="hits" value="4 hits in 209 CRISPR screens"/>
</dbReference>
<dbReference type="ChiTaRS" id="ZSCAN26">
    <property type="organism name" value="human"/>
</dbReference>
<dbReference type="GenomeRNAi" id="7741"/>
<dbReference type="Pharos" id="Q16670">
    <property type="development level" value="Tdark"/>
</dbReference>
<dbReference type="PRO" id="PR:Q16670"/>
<dbReference type="Proteomes" id="UP000005640">
    <property type="component" value="Chromosome 6"/>
</dbReference>
<dbReference type="RNAct" id="Q16670">
    <property type="molecule type" value="protein"/>
</dbReference>
<dbReference type="Bgee" id="ENSG00000197062">
    <property type="expression patterns" value="Expressed in cortical plate and 170 other cell types or tissues"/>
</dbReference>
<dbReference type="ExpressionAtlas" id="Q16670">
    <property type="expression patterns" value="baseline and differential"/>
</dbReference>
<dbReference type="GO" id="GO:0005829">
    <property type="term" value="C:cytosol"/>
    <property type="evidence" value="ECO:0000314"/>
    <property type="project" value="HPA"/>
</dbReference>
<dbReference type="GO" id="GO:0005654">
    <property type="term" value="C:nucleoplasm"/>
    <property type="evidence" value="ECO:0000314"/>
    <property type="project" value="HPA"/>
</dbReference>
<dbReference type="GO" id="GO:0005634">
    <property type="term" value="C:nucleus"/>
    <property type="evidence" value="ECO:0000303"/>
    <property type="project" value="UniProtKB"/>
</dbReference>
<dbReference type="GO" id="GO:0003700">
    <property type="term" value="F:DNA-binding transcription factor activity"/>
    <property type="evidence" value="ECO:0000303"/>
    <property type="project" value="UniProtKB"/>
</dbReference>
<dbReference type="GO" id="GO:0000981">
    <property type="term" value="F:DNA-binding transcription factor activity, RNA polymerase II-specific"/>
    <property type="evidence" value="ECO:0000318"/>
    <property type="project" value="GO_Central"/>
</dbReference>
<dbReference type="GO" id="GO:0000978">
    <property type="term" value="F:RNA polymerase II cis-regulatory region sequence-specific DNA binding"/>
    <property type="evidence" value="ECO:0000318"/>
    <property type="project" value="GO_Central"/>
</dbReference>
<dbReference type="GO" id="GO:0008270">
    <property type="term" value="F:zinc ion binding"/>
    <property type="evidence" value="ECO:0007669"/>
    <property type="project" value="UniProtKB-KW"/>
</dbReference>
<dbReference type="GO" id="GO:0006355">
    <property type="term" value="P:regulation of DNA-templated transcription"/>
    <property type="evidence" value="ECO:0000303"/>
    <property type="project" value="UniProtKB"/>
</dbReference>
<dbReference type="GO" id="GO:0006357">
    <property type="term" value="P:regulation of transcription by RNA polymerase II"/>
    <property type="evidence" value="ECO:0000318"/>
    <property type="project" value="GO_Central"/>
</dbReference>
<dbReference type="CDD" id="cd07936">
    <property type="entry name" value="SCAN"/>
    <property type="match status" value="1"/>
</dbReference>
<dbReference type="FunFam" id="3.30.160.60:FF:001991">
    <property type="entry name" value="Zinc finger and SCAN domain containing 26"/>
    <property type="match status" value="2"/>
</dbReference>
<dbReference type="FunFam" id="3.30.160.60:FF:000467">
    <property type="entry name" value="Zinc finger and SCAN domain-containing 21"/>
    <property type="match status" value="1"/>
</dbReference>
<dbReference type="FunFam" id="3.30.160.60:FF:001661">
    <property type="entry name" value="Zinc finger and SCAN domain-containing 26"/>
    <property type="match status" value="1"/>
</dbReference>
<dbReference type="FunFam" id="3.30.160.60:FF:001087">
    <property type="entry name" value="Zinc finger and SCAN domain-containing protein 26"/>
    <property type="match status" value="1"/>
</dbReference>
<dbReference type="FunFam" id="3.30.160.60:FF:002516">
    <property type="entry name" value="Zinc finger and SCAN domain-containing protein 26"/>
    <property type="match status" value="1"/>
</dbReference>
<dbReference type="FunFam" id="3.30.160.60:FF:001693">
    <property type="entry name" value="zinc finger and SCAN domain-containing protein 26 isoform X1"/>
    <property type="match status" value="1"/>
</dbReference>
<dbReference type="FunFam" id="1.10.4020.10:FF:000001">
    <property type="entry name" value="zinc finger protein 263 isoform X1"/>
    <property type="match status" value="1"/>
</dbReference>
<dbReference type="Gene3D" id="3.30.160.60">
    <property type="entry name" value="Classic Zinc Finger"/>
    <property type="match status" value="8"/>
</dbReference>
<dbReference type="Gene3D" id="1.10.4020.10">
    <property type="entry name" value="DNA breaking-rejoining enzymes"/>
    <property type="match status" value="1"/>
</dbReference>
<dbReference type="InterPro" id="IPR003309">
    <property type="entry name" value="SCAN_dom"/>
</dbReference>
<dbReference type="InterPro" id="IPR038269">
    <property type="entry name" value="SCAN_sf"/>
</dbReference>
<dbReference type="InterPro" id="IPR036236">
    <property type="entry name" value="Znf_C2H2_sf"/>
</dbReference>
<dbReference type="InterPro" id="IPR013087">
    <property type="entry name" value="Znf_C2H2_type"/>
</dbReference>
<dbReference type="PANTHER" id="PTHR23226">
    <property type="entry name" value="ZINC FINGER AND SCAN DOMAIN-CONTAINING"/>
    <property type="match status" value="1"/>
</dbReference>
<dbReference type="PANTHER" id="PTHR23226:SF76">
    <property type="entry name" value="ZINC FINGER AND SCAN DOMAIN-CONTAINING PROTEIN 23"/>
    <property type="match status" value="1"/>
</dbReference>
<dbReference type="Pfam" id="PF02023">
    <property type="entry name" value="SCAN"/>
    <property type="match status" value="1"/>
</dbReference>
<dbReference type="Pfam" id="PF00096">
    <property type="entry name" value="zf-C2H2"/>
    <property type="match status" value="7"/>
</dbReference>
<dbReference type="SMART" id="SM00431">
    <property type="entry name" value="SCAN"/>
    <property type="match status" value="1"/>
</dbReference>
<dbReference type="SMART" id="SM00355">
    <property type="entry name" value="ZnF_C2H2"/>
    <property type="match status" value="8"/>
</dbReference>
<dbReference type="SUPFAM" id="SSF57667">
    <property type="entry name" value="beta-beta-alpha zinc fingers"/>
    <property type="match status" value="5"/>
</dbReference>
<dbReference type="SUPFAM" id="SSF47353">
    <property type="entry name" value="Retrovirus capsid dimerization domain-like"/>
    <property type="match status" value="1"/>
</dbReference>
<dbReference type="PROSITE" id="PS50804">
    <property type="entry name" value="SCAN_BOX"/>
    <property type="match status" value="1"/>
</dbReference>
<dbReference type="PROSITE" id="PS00028">
    <property type="entry name" value="ZINC_FINGER_C2H2_1"/>
    <property type="match status" value="7"/>
</dbReference>
<dbReference type="PROSITE" id="PS50157">
    <property type="entry name" value="ZINC_FINGER_C2H2_2"/>
    <property type="match status" value="8"/>
</dbReference>
<name>ZSC26_HUMAN</name>
<gene>
    <name type="primary">ZSCAN26</name>
    <name type="synonym">ZNF187</name>
</gene>
<reference key="1">
    <citation type="journal article" date="2007" name="BMC Genomics">
        <title>The full-ORF clone resource of the German cDNA consortium.</title>
        <authorList>
            <person name="Bechtel S."/>
            <person name="Rosenfelder H."/>
            <person name="Duda A."/>
            <person name="Schmidt C.P."/>
            <person name="Ernst U."/>
            <person name="Wellenreuther R."/>
            <person name="Mehrle A."/>
            <person name="Schuster C."/>
            <person name="Bahr A."/>
            <person name="Bloecker H."/>
            <person name="Heubner D."/>
            <person name="Hoerlein A."/>
            <person name="Michel G."/>
            <person name="Wedler H."/>
            <person name="Koehrer K."/>
            <person name="Ottenwaelder B."/>
            <person name="Poustka A."/>
            <person name="Wiemann S."/>
            <person name="Schupp I."/>
        </authorList>
    </citation>
    <scope>NUCLEOTIDE SEQUENCE [LARGE SCALE MRNA] (ISOFORM 2)</scope>
    <source>
        <tissue>Cervix</tissue>
    </source>
</reference>
<reference key="2">
    <citation type="journal article" date="2003" name="Nature">
        <title>The DNA sequence and analysis of human chromosome 6.</title>
        <authorList>
            <person name="Mungall A.J."/>
            <person name="Palmer S.A."/>
            <person name="Sims S.K."/>
            <person name="Edwards C.A."/>
            <person name="Ashurst J.L."/>
            <person name="Wilming L."/>
            <person name="Jones M.C."/>
            <person name="Horton R."/>
            <person name="Hunt S.E."/>
            <person name="Scott C.E."/>
            <person name="Gilbert J.G.R."/>
            <person name="Clamp M.E."/>
            <person name="Bethel G."/>
            <person name="Milne S."/>
            <person name="Ainscough R."/>
            <person name="Almeida J.P."/>
            <person name="Ambrose K.D."/>
            <person name="Andrews T.D."/>
            <person name="Ashwell R.I.S."/>
            <person name="Babbage A.K."/>
            <person name="Bagguley C.L."/>
            <person name="Bailey J."/>
            <person name="Banerjee R."/>
            <person name="Barker D.J."/>
            <person name="Barlow K.F."/>
            <person name="Bates K."/>
            <person name="Beare D.M."/>
            <person name="Beasley H."/>
            <person name="Beasley O."/>
            <person name="Bird C.P."/>
            <person name="Blakey S.E."/>
            <person name="Bray-Allen S."/>
            <person name="Brook J."/>
            <person name="Brown A.J."/>
            <person name="Brown J.Y."/>
            <person name="Burford D.C."/>
            <person name="Burrill W."/>
            <person name="Burton J."/>
            <person name="Carder C."/>
            <person name="Carter N.P."/>
            <person name="Chapman J.C."/>
            <person name="Clark S.Y."/>
            <person name="Clark G."/>
            <person name="Clee C.M."/>
            <person name="Clegg S."/>
            <person name="Cobley V."/>
            <person name="Collier R.E."/>
            <person name="Collins J.E."/>
            <person name="Colman L.K."/>
            <person name="Corby N.R."/>
            <person name="Coville G.J."/>
            <person name="Culley K.M."/>
            <person name="Dhami P."/>
            <person name="Davies J."/>
            <person name="Dunn M."/>
            <person name="Earthrowl M.E."/>
            <person name="Ellington A.E."/>
            <person name="Evans K.A."/>
            <person name="Faulkner L."/>
            <person name="Francis M.D."/>
            <person name="Frankish A."/>
            <person name="Frankland J."/>
            <person name="French L."/>
            <person name="Garner P."/>
            <person name="Garnett J."/>
            <person name="Ghori M.J."/>
            <person name="Gilby L.M."/>
            <person name="Gillson C.J."/>
            <person name="Glithero R.J."/>
            <person name="Grafham D.V."/>
            <person name="Grant M."/>
            <person name="Gribble S."/>
            <person name="Griffiths C."/>
            <person name="Griffiths M.N.D."/>
            <person name="Hall R."/>
            <person name="Halls K.S."/>
            <person name="Hammond S."/>
            <person name="Harley J.L."/>
            <person name="Hart E.A."/>
            <person name="Heath P.D."/>
            <person name="Heathcott R."/>
            <person name="Holmes S.J."/>
            <person name="Howden P.J."/>
            <person name="Howe K.L."/>
            <person name="Howell G.R."/>
            <person name="Huckle E."/>
            <person name="Humphray S.J."/>
            <person name="Humphries M.D."/>
            <person name="Hunt A.R."/>
            <person name="Johnson C.M."/>
            <person name="Joy A.A."/>
            <person name="Kay M."/>
            <person name="Keenan S.J."/>
            <person name="Kimberley A.M."/>
            <person name="King A."/>
            <person name="Laird G.K."/>
            <person name="Langford C."/>
            <person name="Lawlor S."/>
            <person name="Leongamornlert D.A."/>
            <person name="Leversha M."/>
            <person name="Lloyd C.R."/>
            <person name="Lloyd D.M."/>
            <person name="Loveland J.E."/>
            <person name="Lovell J."/>
            <person name="Martin S."/>
            <person name="Mashreghi-Mohammadi M."/>
            <person name="Maslen G.L."/>
            <person name="Matthews L."/>
            <person name="McCann O.T."/>
            <person name="McLaren S.J."/>
            <person name="McLay K."/>
            <person name="McMurray A."/>
            <person name="Moore M.J.F."/>
            <person name="Mullikin J.C."/>
            <person name="Niblett D."/>
            <person name="Nickerson T."/>
            <person name="Novik K.L."/>
            <person name="Oliver K."/>
            <person name="Overton-Larty E.K."/>
            <person name="Parker A."/>
            <person name="Patel R."/>
            <person name="Pearce A.V."/>
            <person name="Peck A.I."/>
            <person name="Phillimore B.J.C.T."/>
            <person name="Phillips S."/>
            <person name="Plumb R.W."/>
            <person name="Porter K.M."/>
            <person name="Ramsey Y."/>
            <person name="Ranby S.A."/>
            <person name="Rice C.M."/>
            <person name="Ross M.T."/>
            <person name="Searle S.M."/>
            <person name="Sehra H.K."/>
            <person name="Sheridan E."/>
            <person name="Skuce C.D."/>
            <person name="Smith S."/>
            <person name="Smith M."/>
            <person name="Spraggon L."/>
            <person name="Squares S.L."/>
            <person name="Steward C.A."/>
            <person name="Sycamore N."/>
            <person name="Tamlyn-Hall G."/>
            <person name="Tester J."/>
            <person name="Theaker A.J."/>
            <person name="Thomas D.W."/>
            <person name="Thorpe A."/>
            <person name="Tracey A."/>
            <person name="Tromans A."/>
            <person name="Tubby B."/>
            <person name="Wall M."/>
            <person name="Wallis J.M."/>
            <person name="West A.P."/>
            <person name="White S.S."/>
            <person name="Whitehead S.L."/>
            <person name="Whittaker H."/>
            <person name="Wild A."/>
            <person name="Willey D.J."/>
            <person name="Wilmer T.E."/>
            <person name="Wood J.M."/>
            <person name="Wray P.W."/>
            <person name="Wyatt J.C."/>
            <person name="Young L."/>
            <person name="Younger R.M."/>
            <person name="Bentley D.R."/>
            <person name="Coulson A."/>
            <person name="Durbin R.M."/>
            <person name="Hubbard T."/>
            <person name="Sulston J.E."/>
            <person name="Dunham I."/>
            <person name="Rogers J."/>
            <person name="Beck S."/>
        </authorList>
    </citation>
    <scope>NUCLEOTIDE SEQUENCE [LARGE SCALE GENOMIC DNA]</scope>
</reference>
<reference key="3">
    <citation type="journal article" date="2004" name="Genome Res.">
        <title>The status, quality, and expansion of the NIH full-length cDNA project: the Mammalian Gene Collection (MGC).</title>
        <authorList>
            <consortium name="The MGC Project Team"/>
        </authorList>
    </citation>
    <scope>NUCLEOTIDE SEQUENCE [LARGE SCALE MRNA] (ISOFORM 2)</scope>
    <scope>VARIANT SER-220</scope>
    <source>
        <tissue>Kidney</tissue>
    </source>
</reference>
<reference key="4">
    <citation type="journal article" date="1992" name="Mol. Cell. Biol.">
        <title>Expression cloning of a novel zinc finger protein that binds to the c-fos serum response element.</title>
        <authorList>
            <person name="Attar R.M."/>
            <person name="Gilman M.Z."/>
        </authorList>
    </citation>
    <scope>NUCLEOTIDE SEQUENCE [MRNA] OF 71-478 (ISOFORM 1)</scope>
    <scope>SUBCELLULAR LOCATION</scope>
    <scope>INDUCTION</scope>
</reference>
<reference key="5">
    <citation type="journal article" date="2017" name="Nat. Struct. Mol. Biol.">
        <title>Site-specific mapping of the human SUMO proteome reveals co-modification with phosphorylation.</title>
        <authorList>
            <person name="Hendriks I.A."/>
            <person name="Lyon D."/>
            <person name="Young C."/>
            <person name="Jensen L.J."/>
            <person name="Vertegaal A.C."/>
            <person name="Nielsen M.L."/>
        </authorList>
    </citation>
    <scope>SUMOYLATION [LARGE SCALE ANALYSIS] AT LYS-17</scope>
    <scope>IDENTIFICATION BY MASS SPECTROMETRY [LARGE SCALE ANALYSIS]</scope>
</reference>
<keyword id="KW-0025">Alternative splicing</keyword>
<keyword id="KW-1017">Isopeptide bond</keyword>
<keyword id="KW-0479">Metal-binding</keyword>
<keyword id="KW-0539">Nucleus</keyword>
<keyword id="KW-1267">Proteomics identification</keyword>
<keyword id="KW-1185">Reference proteome</keyword>
<keyword id="KW-0677">Repeat</keyword>
<keyword id="KW-0804">Transcription</keyword>
<keyword id="KW-0805">Transcription regulation</keyword>
<keyword id="KW-0832">Ubl conjugation</keyword>
<keyword id="KW-0862">Zinc</keyword>
<keyword id="KW-0863">Zinc-finger</keyword>
<organism>
    <name type="scientific">Homo sapiens</name>
    <name type="common">Human</name>
    <dbReference type="NCBI Taxonomy" id="9606"/>
    <lineage>
        <taxon>Eukaryota</taxon>
        <taxon>Metazoa</taxon>
        <taxon>Chordata</taxon>
        <taxon>Craniata</taxon>
        <taxon>Vertebrata</taxon>
        <taxon>Euteleostomi</taxon>
        <taxon>Mammalia</taxon>
        <taxon>Eutheria</taxon>
        <taxon>Euarchontoglires</taxon>
        <taxon>Primates</taxon>
        <taxon>Haplorrhini</taxon>
        <taxon>Catarrhini</taxon>
        <taxon>Hominidae</taxon>
        <taxon>Homo</taxon>
    </lineage>
</organism>
<sequence>MATALVSAHSLAPLNLKKEGLRVVREDHYSTWEQGFKLQGNSKGLGQEPLCKQFRQLRYEETTGPREALSRLRELCQQWLQPETHTKEQILELLVLEQFLIILPKELQARVQEHHPESREDVVVVLEDLQLDLGETGQQDPDQPKKQKILVEEMAPLKGVQEQQVRHECEVTKPEKEKGEETRIENGKLIVVTDSCGRVESSGKISEPMEAHNEGSNLERHQAKPKEKIEYKCSEREQRFIQHLDLIEHASTHTGKKLCESDVCQSSSLTGHKKVLSREKGHQCHECGKAFQRSSHLVRHQKIHLGEKPYQCNECGKVFSQNAGLLEHLRIHTGEKPYLCIHCGKNFRRSSHLNRHQRIHSQEEPCECKECGKTFSQALLLTHHQRIHSHSKSHQCNECGKAFSLTSDLIRHHRIHTGEKPFKCNICQKAFRLNSHLAQHVRIHNEEKPYQCSECGEAFRQRSGLFQHQRYHHKDKLA</sequence>
<accession>Q16670</accession>
<accession>Q5JPG4</accession>
<accession>Q7Z3Q6</accession>
<accession>Q96A17</accession>
<protein>
    <recommendedName>
        <fullName>Zinc finger and SCAN domain-containing protein 26</fullName>
    </recommendedName>
    <alternativeName>
        <fullName>Protein SRE-ZBP</fullName>
    </alternativeName>
    <alternativeName>
        <fullName>Zinc finger protein 187</fullName>
    </alternativeName>
</protein>
<feature type="chain" id="PRO_0000307313" description="Zinc finger and SCAN domain-containing protein 26">
    <location>
        <begin position="1"/>
        <end position="478"/>
    </location>
</feature>
<feature type="domain" description="SCAN box" evidence="2">
    <location>
        <begin position="51"/>
        <end position="133"/>
    </location>
</feature>
<feature type="zinc finger region" description="C2H2-type 1; degenerate" evidence="1">
    <location>
        <begin position="231"/>
        <end position="253"/>
    </location>
</feature>
<feature type="zinc finger region" description="C2H2-type 2" evidence="1">
    <location>
        <begin position="282"/>
        <end position="304"/>
    </location>
</feature>
<feature type="zinc finger region" description="C2H2-type 3" evidence="1">
    <location>
        <begin position="310"/>
        <end position="332"/>
    </location>
</feature>
<feature type="zinc finger region" description="C2H2-type 4" evidence="1">
    <location>
        <begin position="338"/>
        <end position="360"/>
    </location>
</feature>
<feature type="zinc finger region" description="C2H2-type 5" evidence="1">
    <location>
        <begin position="366"/>
        <end position="388"/>
    </location>
</feature>
<feature type="zinc finger region" description="C2H2-type 6" evidence="1">
    <location>
        <begin position="394"/>
        <end position="416"/>
    </location>
</feature>
<feature type="zinc finger region" description="C2H2-type 7" evidence="1">
    <location>
        <begin position="422"/>
        <end position="444"/>
    </location>
</feature>
<feature type="zinc finger region" description="C2H2-type 8" evidence="1">
    <location>
        <begin position="450"/>
        <end position="472"/>
    </location>
</feature>
<feature type="region of interest" description="Disordered" evidence="3">
    <location>
        <begin position="159"/>
        <end position="181"/>
    </location>
</feature>
<feature type="region of interest" description="Disordered" evidence="3">
    <location>
        <begin position="200"/>
        <end position="226"/>
    </location>
</feature>
<feature type="compositionally biased region" description="Basic and acidic residues" evidence="3">
    <location>
        <begin position="164"/>
        <end position="181"/>
    </location>
</feature>
<feature type="compositionally biased region" description="Basic and acidic residues" evidence="3">
    <location>
        <begin position="207"/>
        <end position="226"/>
    </location>
</feature>
<feature type="cross-link" description="Glycyl lysine isopeptide (Lys-Gly) (interchain with G-Cter in SUMO2)" evidence="9">
    <location>
        <position position="17"/>
    </location>
</feature>
<feature type="splice variant" id="VSP_028702" description="In isoform 2." evidence="6 7">
    <location>
        <begin position="1"/>
        <end position="153"/>
    </location>
</feature>
<feature type="sequence variant" id="VAR_059900" description="In dbSNP:rs16893892.">
    <original>Y</original>
    <variation>C</variation>
    <location>
        <position position="59"/>
    </location>
</feature>
<feature type="sequence variant" id="VAR_059901" description="In dbSNP:rs11965538.">
    <original>R</original>
    <variation>Q</variation>
    <location>
        <position position="73"/>
    </location>
</feature>
<feature type="sequence variant" id="VAR_059902" description="In dbSNP:rs11965542.">
    <original>E</original>
    <variation>K</variation>
    <location>
        <position position="83"/>
    </location>
</feature>
<feature type="sequence variant" id="VAR_035405" description="In dbSNP:rs17851075." evidence="4">
    <original>R</original>
    <variation>S</variation>
    <location>
        <position position="220"/>
    </location>
</feature>
<feature type="sequence conflict" description="In Ref. 1; CAI46119." evidence="8" ref="1">
    <original>E</original>
    <variation>G</variation>
    <location>
        <position position="230"/>
    </location>
</feature>
<feature type="sequence conflict" description="In Ref. 4; CAA77818." evidence="8" ref="4">
    <original>L</original>
    <variation>S</variation>
    <location>
        <position position="258"/>
    </location>
</feature>
<proteinExistence type="evidence at protein level"/>